<feature type="chain" id="PRO_0000106035" description="Membrane protein">
    <location>
        <begin position="1"/>
        <end position="221"/>
    </location>
</feature>
<feature type="topological domain" description="Virion surface" evidence="6">
    <location>
        <begin position="1"/>
        <end position="18"/>
    </location>
</feature>
<feature type="transmembrane region" description="Helical" evidence="6">
    <location>
        <begin position="19"/>
        <end position="39"/>
    </location>
</feature>
<feature type="topological domain" description="Intravirion" evidence="6">
    <location>
        <begin position="40"/>
        <end position="49"/>
    </location>
</feature>
<feature type="transmembrane region" description="Helical" evidence="6">
    <location>
        <begin position="50"/>
        <end position="70"/>
    </location>
</feature>
<feature type="topological domain" description="Virion surface" evidence="6">
    <location>
        <begin position="71"/>
        <end position="78"/>
    </location>
</feature>
<feature type="transmembrane region" description="Helical" evidence="6">
    <location>
        <begin position="79"/>
        <end position="99"/>
    </location>
</feature>
<feature type="topological domain" description="Intravirion" evidence="6">
    <location>
        <begin position="100"/>
        <end position="221"/>
    </location>
</feature>
<feature type="glycosylation site" description="N-linked (GlcNAc...) asparagine; by host" evidence="6">
    <location>
        <position position="4"/>
    </location>
</feature>
<feature type="sequence variant" description="In strain: Isolate Sin2500.">
    <original>E</original>
    <variation>K</variation>
    <location>
        <position position="11"/>
    </location>
</feature>
<feature type="sequence variant" description="In strain: Isolate CUHK-Su10, Isolate TWC2, Isolate TWC3, Isolate TWH, Isolate TWJ, Isolate TWK, Isolate TWS, Isolate TWY, Isolate Taiwan TC1, Isolate Taiwan TC2 and Isolate Taiwan TC3.">
    <original>F</original>
    <variation>C</variation>
    <location>
        <position position="27"/>
    </location>
</feature>
<feature type="sequence variant" description="In strain: Isolate HKU-39849, Isolate FRA and Isolate Frankfurt 1.">
    <original>A</original>
    <variation>V</variation>
    <location>
        <position position="68"/>
    </location>
</feature>
<feature type="sequence variant" description="In strain: Isolate TC3.">
    <original>N</original>
    <variation>T</variation>
    <location>
        <position position="73"/>
    </location>
</feature>
<feature type="sequence variant" description="In strain: Isolate Shanghai QXC1.">
    <original>L</original>
    <variation>P</variation>
    <location>
        <position position="119"/>
    </location>
</feature>
<feature type="sequence variant" description="In strain: Isolate Urbani.">
    <original>S</original>
    <variation>P</variation>
    <location>
        <position position="154"/>
    </location>
</feature>
<proteinExistence type="evidence at protein level"/>
<sequence length="221" mass="25061">MADNGTITVEELKQLLEQWNLVIGFLFLAWIMLLQFAYSNRNRFLYIIKLVFLWLLWPVTLACFVLAAVYRINWVTGGIAIAMACIVGLMWLSYFVASFRLFARTRSMWSFNPETNILLNVPLRGTIVTRPLMESELVIGAVIIRGHLRMAGHSLGRCDIKDLPKEITVATSRTLSYYKLGASQRVGTDSGFAAYNRYRIGNYKLNTDHAGSNDNIALLVQ</sequence>
<organism>
    <name type="scientific">Severe acute respiratory syndrome coronavirus</name>
    <name type="common">SARS-CoV</name>
    <dbReference type="NCBI Taxonomy" id="694009"/>
    <lineage>
        <taxon>Viruses</taxon>
        <taxon>Riboviria</taxon>
        <taxon>Orthornavirae</taxon>
        <taxon>Pisuviricota</taxon>
        <taxon>Pisoniviricetes</taxon>
        <taxon>Nidovirales</taxon>
        <taxon>Cornidovirineae</taxon>
        <taxon>Coronaviridae</taxon>
        <taxon>Orthocoronavirinae</taxon>
        <taxon>Betacoronavirus</taxon>
        <taxon>Sarbecovirus</taxon>
    </lineage>
</organism>
<comment type="function">
    <text evidence="1 2">Component of the viral envelope that plays a central role in virus morphogenesis and assembly via its interactions with other viral proteins.</text>
</comment>
<comment type="subunit">
    <text evidence="1 3 4 5">Homomultimer. Interacts with envelope E protein in the budding compartment of the host cell, which is located between endoplasmic reticulum and the Golgi complex. Forms a complex with HE and S proteins. Interacts with nucleocapsid N protein. This interaction probably participates in RNA packaging into the virus (By similarity). Interacts with the accessory proteins 3a and 7a.</text>
</comment>
<comment type="interaction">
    <interactant intactId="EBI-25487824">
        <id>P59596</id>
    </interactant>
    <interactant intactId="EBI-15595051">
        <id>P59632</id>
        <label>3a</label>
    </interactant>
    <organismsDiffer>false</organismsDiffer>
    <experiments>2</experiments>
</comment>
<comment type="interaction">
    <interactant intactId="EBI-25487824">
        <id>P59596</id>
    </interactant>
    <interactant intactId="EBI-25487741">
        <id>P59637</id>
        <label>E</label>
    </interactant>
    <organismsDiffer>false</organismsDiffer>
    <experiments>6</experiments>
</comment>
<comment type="interaction">
    <interactant intactId="EBI-25487824">
        <id>P59596</id>
    </interactant>
    <interactant intactId="EBI-25487824">
        <id>P59596</id>
        <label>M</label>
    </interactant>
    <organismsDiffer>false</organismsDiffer>
    <experiments>4</experiments>
</comment>
<comment type="interaction">
    <interactant intactId="EBI-25487824">
        <id>P59596</id>
    </interactant>
    <interactant intactId="EBI-7602718">
        <id>P59595</id>
        <label>N</label>
    </interactant>
    <organismsDiffer>false</organismsDiffer>
    <experiments>19</experiments>
</comment>
<comment type="interaction">
    <interactant intactId="EBI-25487824">
        <id>P59596</id>
    </interactant>
    <interactant intactId="EBI-995350">
        <id>O95786</id>
        <label>RIGI</label>
    </interactant>
    <organismsDiffer>true</organismsDiffer>
    <experiments>4</experiments>
</comment>
<comment type="interaction">
    <interactant intactId="EBI-25487824">
        <id>P59596</id>
    </interactant>
    <interactant intactId="EBI-356402">
        <id>Q9UHD2</id>
        <label>TBK1</label>
    </interactant>
    <organismsDiffer>true</organismsDiffer>
    <experiments>5</experiments>
</comment>
<comment type="subcellular location">
    <subcellularLocation>
        <location evidence="1">Virion membrane</location>
        <topology evidence="1">Multi-pass membrane protein</topology>
    </subcellularLocation>
    <subcellularLocation>
        <location evidence="1">Host Golgi apparatus membrane</location>
        <topology evidence="1">Multi-pass membrane protein</topology>
    </subcellularLocation>
    <text evidence="1">Largely embedded in the lipid bilayer.</text>
</comment>
<comment type="PTM">
    <text evidence="6">Glycosylated at N-terminus.</text>
</comment>
<comment type="similarity">
    <text evidence="1">Belongs to the betacoronaviruses M protein family.</text>
</comment>
<name>VME1_SARS</name>
<organismHost>
    <name type="scientific">Homo sapiens</name>
    <name type="common">Human</name>
    <dbReference type="NCBI Taxonomy" id="9606"/>
</organismHost>
<organismHost>
    <name type="scientific">Paguma larvata</name>
    <name type="common">Masked palm civet</name>
    <dbReference type="NCBI Taxonomy" id="9675"/>
</organismHost>
<protein>
    <recommendedName>
        <fullName evidence="1">Membrane protein</fullName>
        <shortName evidence="1">M protein</shortName>
    </recommendedName>
    <alternativeName>
        <fullName evidence="1">E1 glycoprotein</fullName>
    </alternativeName>
    <alternativeName>
        <fullName evidence="1">Matrix glycoprotein</fullName>
    </alternativeName>
    <alternativeName>
        <fullName evidence="1">Membrane glycoprotein</fullName>
    </alternativeName>
</protein>
<keyword id="KW-0002">3D-structure</keyword>
<keyword id="KW-0325">Glycoprotein</keyword>
<keyword id="KW-1040">Host Golgi apparatus</keyword>
<keyword id="KW-1043">Host membrane</keyword>
<keyword id="KW-0945">Host-virus interaction</keyword>
<keyword id="KW-0472">Membrane</keyword>
<keyword id="KW-1185">Reference proteome</keyword>
<keyword id="KW-0812">Transmembrane</keyword>
<keyword id="KW-1133">Transmembrane helix</keyword>
<keyword id="KW-0261">Viral envelope protein</keyword>
<keyword id="KW-0899">Viral immunoevasion</keyword>
<keyword id="KW-0468">Viral matrix protein</keyword>
<keyword id="KW-0946">Virion</keyword>
<accession>P59596</accession>
<accession>Q6S8E5</accession>
<accession>Q7T6Q8</accession>
<accession>Q7T6R1</accession>
<accession>Q7T6R5</accession>
<accession>Q7T6S0</accession>
<accession>Q7T6S3</accession>
<accession>Q7T726</accession>
<accession>Q7T7P6</accession>
<accession>Q7T7S6</accession>
<accession>Q7TA12</accession>
<dbReference type="EMBL" id="AY278741">
    <property type="protein sequence ID" value="AAP13444.1"/>
    <property type="molecule type" value="Genomic_RNA"/>
</dbReference>
<dbReference type="EMBL" id="AY274119">
    <property type="protein sequence ID" value="AAP41041.1"/>
    <property type="molecule type" value="Genomic_RNA"/>
</dbReference>
<dbReference type="EMBL" id="AY278554">
    <property type="protein sequence ID" value="AAP13571.1"/>
    <property type="molecule type" value="Genomic_RNA"/>
</dbReference>
<dbReference type="EMBL" id="AY282752">
    <property type="status" value="NOT_ANNOTATED_CDS"/>
    <property type="molecule type" value="Genomic_RNA"/>
</dbReference>
<dbReference type="EMBL" id="AY304492">
    <property type="status" value="NOT_ANNOTATED_CDS"/>
    <property type="molecule type" value="Genomic_RNA"/>
</dbReference>
<dbReference type="EMBL" id="AY304495">
    <property type="status" value="NOT_ANNOTATED_CDS"/>
    <property type="molecule type" value="Genomic_RNA"/>
</dbReference>
<dbReference type="EMBL" id="AY278491">
    <property type="status" value="NOT_ANNOTATED_CDS"/>
    <property type="molecule type" value="Genomic_RNA"/>
</dbReference>
<dbReference type="EMBL" id="AY283794">
    <property type="status" value="NOT_ANNOTATED_CDS"/>
    <property type="molecule type" value="Genomic_RNA"/>
</dbReference>
<dbReference type="EMBL" id="AY283795">
    <property type="status" value="NOT_ANNOTATED_CDS"/>
    <property type="molecule type" value="Genomic_RNA"/>
</dbReference>
<dbReference type="EMBL" id="AY283796">
    <property type="status" value="NOT_ANNOTATED_CDS"/>
    <property type="molecule type" value="Genomic_RNA"/>
</dbReference>
<dbReference type="EMBL" id="AY283797">
    <property type="status" value="NOT_ANNOTATED_CDS"/>
    <property type="molecule type" value="Genomic_RNA"/>
</dbReference>
<dbReference type="EMBL" id="AY283798">
    <property type="status" value="NOT_ANNOTATED_CDS"/>
    <property type="molecule type" value="Genomic_RNA"/>
</dbReference>
<dbReference type="EMBL" id="AY278487">
    <property type="status" value="NOT_ANNOTATED_CDS"/>
    <property type="molecule type" value="Genomic_RNA"/>
</dbReference>
<dbReference type="EMBL" id="AY278488">
    <property type="protein sequence ID" value="AAP30034.1"/>
    <property type="molecule type" value="Genomic_RNA"/>
</dbReference>
<dbReference type="EMBL" id="AY278489">
    <property type="protein sequence ID" value="AAP51231.1"/>
    <property type="molecule type" value="Genomic_RNA"/>
</dbReference>
<dbReference type="EMBL" id="AY278490">
    <property type="status" value="NOT_ANNOTATED_CDS"/>
    <property type="molecule type" value="Genomic_RNA"/>
</dbReference>
<dbReference type="EMBL" id="AY279354">
    <property type="status" value="NOT_ANNOTATED_CDS"/>
    <property type="molecule type" value="Genomic_RNA"/>
</dbReference>
<dbReference type="EMBL" id="AY291451">
    <property type="protein sequence ID" value="AAP37021.1"/>
    <property type="molecule type" value="Genomic_RNA"/>
</dbReference>
<dbReference type="EMBL" id="AY310120">
    <property type="protein sequence ID" value="AAP50489.1"/>
    <property type="molecule type" value="Genomic_RNA"/>
</dbReference>
<dbReference type="EMBL" id="AY291315">
    <property type="protein sequence ID" value="AAP33701.1"/>
    <property type="molecule type" value="Genomic_RNA"/>
</dbReference>
<dbReference type="EMBL" id="AY463059">
    <property type="protein sequence ID" value="AAR86790.1"/>
    <property type="molecule type" value="Genomic_RNA"/>
</dbReference>
<dbReference type="EMBL" id="AY323974">
    <property type="protein sequence ID" value="AAP73415.1"/>
    <property type="molecule type" value="mRNA"/>
</dbReference>
<dbReference type="EMBL" id="AY321118">
    <property type="status" value="NOT_ANNOTATED_CDS"/>
    <property type="molecule type" value="Genomic_RNA"/>
</dbReference>
<dbReference type="EMBL" id="AY338174">
    <property type="protein sequence ID" value="AAQ01601.1"/>
    <property type="molecule type" value="Genomic_RNA"/>
</dbReference>
<dbReference type="EMBL" id="AY338175">
    <property type="protein sequence ID" value="AAQ01613.1"/>
    <property type="molecule type" value="Genomic_RNA"/>
</dbReference>
<dbReference type="EMBL" id="AY348314">
    <property type="protein sequence ID" value="AAP97886.1"/>
    <property type="molecule type" value="Genomic_RNA"/>
</dbReference>
<dbReference type="EMBL" id="AP006557">
    <property type="protein sequence ID" value="BAC81352.1"/>
    <property type="molecule type" value="Genomic_RNA"/>
</dbReference>
<dbReference type="EMBL" id="AP006558">
    <property type="protein sequence ID" value="BAC81366.1"/>
    <property type="molecule type" value="Genomic_RNA"/>
</dbReference>
<dbReference type="EMBL" id="AP006559">
    <property type="protein sequence ID" value="BAC81380.1"/>
    <property type="molecule type" value="Genomic_RNA"/>
</dbReference>
<dbReference type="EMBL" id="AP006560">
    <property type="protein sequence ID" value="BAC81394.1"/>
    <property type="molecule type" value="Genomic_RNA"/>
</dbReference>
<dbReference type="EMBL" id="AP006561">
    <property type="protein sequence ID" value="BAC81408.1"/>
    <property type="molecule type" value="Genomic_RNA"/>
</dbReference>
<dbReference type="EMBL" id="AY323977">
    <property type="protein sequence ID" value="AAP72978.1"/>
    <property type="molecule type" value="Genomic_RNA"/>
</dbReference>
<dbReference type="EMBL" id="AY362698">
    <property type="status" value="NOT_ANNOTATED_CDS"/>
    <property type="molecule type" value="Genomic_RNA"/>
</dbReference>
<dbReference type="EMBL" id="AY362699">
    <property type="status" value="NOT_ANNOTATED_CDS"/>
    <property type="molecule type" value="Genomic_RNA"/>
</dbReference>
<dbReference type="EMBL" id="AY427439">
    <property type="protein sequence ID" value="AAQ94064.1"/>
    <property type="molecule type" value="Genomic_RNA"/>
</dbReference>
<dbReference type="PDB" id="3I6G">
    <property type="method" value="X-ray"/>
    <property type="resolution" value="2.20 A"/>
    <property type="chains" value="C/F=88-96"/>
</dbReference>
<dbReference type="PDB" id="3I6K">
    <property type="method" value="X-ray"/>
    <property type="resolution" value="2.80 A"/>
    <property type="chains" value="C/G=60-69"/>
</dbReference>
<dbReference type="PDB" id="3TO2">
    <property type="method" value="X-ray"/>
    <property type="resolution" value="2.60 A"/>
    <property type="chains" value="C=61-69"/>
</dbReference>
<dbReference type="PDBsum" id="3I6G"/>
<dbReference type="PDBsum" id="3I6K"/>
<dbReference type="PDBsum" id="3TO2"/>
<dbReference type="SMR" id="P59596"/>
<dbReference type="BioGRID" id="4383913">
    <property type="interactions" value="116"/>
</dbReference>
<dbReference type="ELM" id="P59596"/>
<dbReference type="IntAct" id="P59596">
    <property type="interactions" value="111"/>
</dbReference>
<dbReference type="GlyCosmos" id="P59596">
    <property type="glycosylation" value="1 site, No reported glycans"/>
</dbReference>
<dbReference type="GlyGen" id="P59596">
    <property type="glycosylation" value="1 site"/>
</dbReference>
<dbReference type="iPTMnet" id="P59596"/>
<dbReference type="ABCD" id="P59596">
    <property type="antibodies" value="1 sequenced antibody"/>
</dbReference>
<dbReference type="DNASU" id="1489672"/>
<dbReference type="OrthoDB" id="8130at10239"/>
<dbReference type="Reactome" id="R-HSA-9678110">
    <property type="pathway name" value="Attachment and Entry"/>
</dbReference>
<dbReference type="Reactome" id="R-HSA-9679509">
    <property type="pathway name" value="Virion Assembly and Release"/>
</dbReference>
<dbReference type="Reactome" id="R-HSA-9683612">
    <property type="pathway name" value="Maturation of protein M"/>
</dbReference>
<dbReference type="Reactome" id="R-HSA-9683701">
    <property type="pathway name" value="Translation of Structural Proteins"/>
</dbReference>
<dbReference type="Reactome" id="R-HSA-9692916">
    <property type="pathway name" value="SARS-CoV-1 activates/modulates innate immune responses"/>
</dbReference>
<dbReference type="Reactome" id="R-HSA-9735871">
    <property type="pathway name" value="SARS-CoV-1 targets host intracellular signalling and regulatory pathways"/>
</dbReference>
<dbReference type="SIGNOR" id="P59596"/>
<dbReference type="EvolutionaryTrace" id="P59596"/>
<dbReference type="Proteomes" id="UP000000354">
    <property type="component" value="Segment"/>
</dbReference>
<dbReference type="Proteomes" id="UP000103670">
    <property type="component" value="Segment"/>
</dbReference>
<dbReference type="Proteomes" id="UP000109640">
    <property type="component" value="Segment"/>
</dbReference>
<dbReference type="Proteomes" id="UP000116947">
    <property type="component" value="Segment"/>
</dbReference>
<dbReference type="Proteomes" id="UP000121636">
    <property type="component" value="Segment"/>
</dbReference>
<dbReference type="Proteomes" id="UP000131569">
    <property type="component" value="Segment"/>
</dbReference>
<dbReference type="Proteomes" id="UP000131955">
    <property type="component" value="Segment"/>
</dbReference>
<dbReference type="Proteomes" id="UP000137377">
    <property type="component" value="Genome"/>
</dbReference>
<dbReference type="Proteomes" id="UP000138690">
    <property type="component" value="Segment"/>
</dbReference>
<dbReference type="Proteomes" id="UP000143093">
    <property type="component" value="Segment"/>
</dbReference>
<dbReference type="Proteomes" id="UP000145651">
    <property type="component" value="Segment"/>
</dbReference>
<dbReference type="Proteomes" id="UP000146108">
    <property type="component" value="Segment"/>
</dbReference>
<dbReference type="Proteomes" id="UP000146181">
    <property type="component" value="Segment"/>
</dbReference>
<dbReference type="Proteomes" id="UP000146296">
    <property type="component" value="Segment"/>
</dbReference>
<dbReference type="Proteomes" id="UP000148194">
    <property type="component" value="Segment"/>
</dbReference>
<dbReference type="Proteomes" id="UP000153467">
    <property type="component" value="Segment"/>
</dbReference>
<dbReference type="Proteomes" id="UP000160648">
    <property type="component" value="Segment"/>
</dbReference>
<dbReference type="Proteomes" id="UP000164441">
    <property type="component" value="Segment"/>
</dbReference>
<dbReference type="Proteomes" id="UP000172416">
    <property type="component" value="Segment"/>
</dbReference>
<dbReference type="Proteomes" id="UP000180358">
    <property type="component" value="Segment"/>
</dbReference>
<dbReference type="GO" id="GO:0044178">
    <property type="term" value="C:host cell Golgi membrane"/>
    <property type="evidence" value="ECO:0007669"/>
    <property type="project" value="UniProtKB-SubCell"/>
</dbReference>
<dbReference type="GO" id="GO:0005886">
    <property type="term" value="C:plasma membrane"/>
    <property type="evidence" value="ECO:0000304"/>
    <property type="project" value="Reactome"/>
</dbReference>
<dbReference type="GO" id="GO:0019031">
    <property type="term" value="C:viral envelope"/>
    <property type="evidence" value="ECO:0007669"/>
    <property type="project" value="UniProtKB-UniRule"/>
</dbReference>
<dbReference type="GO" id="GO:0055036">
    <property type="term" value="C:virion membrane"/>
    <property type="evidence" value="ECO:0000304"/>
    <property type="project" value="Reactome"/>
</dbReference>
<dbReference type="GO" id="GO:0042802">
    <property type="term" value="F:identical protein binding"/>
    <property type="evidence" value="ECO:0000353"/>
    <property type="project" value="IntAct"/>
</dbReference>
<dbReference type="GO" id="GO:0039660">
    <property type="term" value="F:structural constituent of virion"/>
    <property type="evidence" value="ECO:0007669"/>
    <property type="project" value="UniProtKB-UniRule"/>
</dbReference>
<dbReference type="CDD" id="cd21569">
    <property type="entry name" value="SARS-like-CoV_M"/>
    <property type="match status" value="1"/>
</dbReference>
<dbReference type="HAMAP" id="MF_04202">
    <property type="entry name" value="BETA_CORONA_M"/>
    <property type="match status" value="1"/>
</dbReference>
<dbReference type="InterPro" id="IPR002574">
    <property type="entry name" value="M_CoV"/>
</dbReference>
<dbReference type="InterPro" id="IPR044361">
    <property type="entry name" value="M_SARS-like-CoV"/>
</dbReference>
<dbReference type="Pfam" id="PF01635">
    <property type="entry name" value="CoV_M"/>
    <property type="match status" value="1"/>
</dbReference>
<dbReference type="PROSITE" id="PS51927">
    <property type="entry name" value="COV_M"/>
    <property type="match status" value="1"/>
</dbReference>
<gene>
    <name evidence="1" type="primary">M</name>
    <name type="ORF">5</name>
</gene>
<evidence type="ECO:0000255" key="1">
    <source>
        <dbReference type="HAMAP-Rule" id="MF_04202"/>
    </source>
</evidence>
<evidence type="ECO:0000255" key="2">
    <source>
        <dbReference type="PROSITE-ProRule" id="PRU01275"/>
    </source>
</evidence>
<evidence type="ECO:0000269" key="3">
    <source>
    </source>
</evidence>
<evidence type="ECO:0000269" key="4">
    <source>
    </source>
</evidence>
<evidence type="ECO:0000269" key="5">
    <source>
    </source>
</evidence>
<evidence type="ECO:0000269" key="6">
    <source>
    </source>
</evidence>
<reference key="1">
    <citation type="journal article" date="2003" name="Science">
        <title>Characterization of a novel coronavirus associated with severe acute respiratory syndrome.</title>
        <authorList>
            <person name="Rota P.A."/>
            <person name="Oberste M.S."/>
            <person name="Monroe S.S."/>
            <person name="Nix W.A."/>
            <person name="Campagnoli R."/>
            <person name="Icenogle J.P."/>
            <person name="Penaranda S."/>
            <person name="Bankamp B."/>
            <person name="Maher K."/>
            <person name="Chen M.-H."/>
            <person name="Tong S."/>
            <person name="Tamin A."/>
            <person name="Lowe L."/>
            <person name="Frace M."/>
            <person name="DeRisi J.L."/>
            <person name="Chen Q."/>
            <person name="Wang D."/>
            <person name="Erdman D.D."/>
            <person name="Peret T.C.T."/>
            <person name="Burns C."/>
            <person name="Ksiazek T.G."/>
            <person name="Rollin P.E."/>
            <person name="Sanchez A."/>
            <person name="Liffick S."/>
            <person name="Holloway B."/>
            <person name="Limor J."/>
            <person name="McCaustland K."/>
            <person name="Olsen-Rasmussen M."/>
            <person name="Fouchier R."/>
            <person name="Guenther S."/>
            <person name="Osterhaus A.D.M.E."/>
            <person name="Drosten C."/>
            <person name="Pallansch M.A."/>
            <person name="Anderson L.J."/>
            <person name="Bellini W.J."/>
        </authorList>
    </citation>
    <scope>NUCLEOTIDE SEQUENCE [GENOMIC RNA]</scope>
    <source>
        <strain>Isolate Urbani</strain>
    </source>
</reference>
<reference key="2">
    <citation type="journal article" date="2003" name="Science">
        <title>The genome sequence of the SARS-associated coronavirus.</title>
        <authorList>
            <person name="Marra M.A."/>
            <person name="Jones S.J.M."/>
            <person name="Astell C.R."/>
            <person name="Holt R.A."/>
            <person name="Brooks-Wilson A."/>
            <person name="Butterfield Y.S.N."/>
            <person name="Khattra J."/>
            <person name="Asano J.K."/>
            <person name="Barber S.A."/>
            <person name="Chan S.Y."/>
            <person name="Cloutier A."/>
            <person name="Coughlin S.M."/>
            <person name="Freeman D."/>
            <person name="Girn N."/>
            <person name="Griffith O.L."/>
            <person name="Leach S.R."/>
            <person name="Mayo M."/>
            <person name="McDonald H."/>
            <person name="Montgomery S.B."/>
            <person name="Pandoh P.K."/>
            <person name="Petrescu A.S."/>
            <person name="Robertson A.G."/>
            <person name="Schein J.E."/>
            <person name="Siddiqui A."/>
            <person name="Smailus D.E."/>
            <person name="Stott J.M."/>
            <person name="Yang G.S."/>
            <person name="Plummer F."/>
            <person name="Andonov A."/>
            <person name="Artsob H."/>
            <person name="Bastien N."/>
            <person name="Bernard K."/>
            <person name="Booth T.F."/>
            <person name="Bowness D."/>
            <person name="Czub M."/>
            <person name="Drebot M."/>
            <person name="Fernando L."/>
            <person name="Flick R."/>
            <person name="Garbutt M."/>
            <person name="Gray M."/>
            <person name="Grolla A."/>
            <person name="Jones S."/>
            <person name="Feldmann H."/>
            <person name="Meyers A."/>
            <person name="Kabani A."/>
            <person name="Li Y."/>
            <person name="Normand S."/>
            <person name="Stroher U."/>
            <person name="Tipples G.A."/>
            <person name="Tyler S."/>
            <person name="Vogrig R."/>
            <person name="Ward D."/>
            <person name="Watson B."/>
            <person name="Brunham R.C."/>
            <person name="Krajden M."/>
            <person name="Petric M."/>
            <person name="Skowronski D.M."/>
            <person name="Upton C."/>
            <person name="Roper R.L."/>
        </authorList>
    </citation>
    <scope>NUCLEOTIDE SEQUENCE [GENOMIC RNA]</scope>
    <source>
        <strain>Isolate Tor2</strain>
    </source>
</reference>
<reference key="3">
    <citation type="journal article" date="2003" name="N. Engl. J. Med.">
        <title>Coronavirus genomic-sequence variations and the epidemiology of the severe acute respiratory syndrome.</title>
        <authorList>
            <person name="Tsui S.K.W."/>
            <person name="Chim S.S.C."/>
            <person name="Lo Y.M.D."/>
        </authorList>
    </citation>
    <scope>NUCLEOTIDE SEQUENCE [GENOMIC RNA]</scope>
    <source>
        <strain>Isolate CUHK-Su10</strain>
        <strain>Isolate CUHK-W1</strain>
    </source>
</reference>
<reference key="4">
    <citation type="journal article" date="2003" name="Science">
        <title>Isolation and characterization of viruses related to the SARS coronavirus from animals in southern China.</title>
        <authorList>
            <person name="Guan Y."/>
            <person name="Zheng B.J."/>
            <person name="He Y.Q."/>
            <person name="Liu X.L."/>
            <person name="Zhuang Z.X."/>
            <person name="Cheung C.L."/>
            <person name="Luo S.W."/>
            <person name="Li P.H."/>
            <person name="Zhang L.J."/>
            <person name="Guan Y.J."/>
            <person name="Butt K.M."/>
            <person name="Wong K.L."/>
            <person name="Chan K.W."/>
            <person name="Lim W."/>
            <person name="Shortridge K.F."/>
            <person name="Yuen K.Y."/>
            <person name="Peiris J.S.M."/>
            <person name="Poon L.L.M."/>
        </authorList>
    </citation>
    <scope>NUCLEOTIDE SEQUENCE [GENOMIC RNA]</scope>
    <source>
        <strain>Isolate GZ50</strain>
        <strain>Isolate HKU-36871</strain>
    </source>
</reference>
<reference key="5">
    <citation type="journal article" date="2003" name="Exp. Biol. Med.">
        <title>The complete genome sequence of severe acute respiratory syndrome coronavirus strain HKU-39849 (HK-39).</title>
        <authorList>
            <person name="Zeng F.Y."/>
            <person name="Chan C.W."/>
            <person name="Chan M.N."/>
            <person name="Chen J.D."/>
            <person name="Chow K.Y.C."/>
            <person name="Hon C.C.C."/>
            <person name="Hui R.K.H."/>
            <person name="Li J."/>
            <person name="Li V.Y.Y."/>
            <person name="Wang C.Y."/>
            <person name="Wang P.Y."/>
            <person name="Guan Y."/>
            <person name="Zheng B."/>
            <person name="Poon L.L.M."/>
            <person name="Chan K.H."/>
            <person name="Yuen K.Y."/>
            <person name="Peiris J.S.M."/>
            <person name="Leung F.C."/>
        </authorList>
    </citation>
    <scope>NUCLEOTIDE SEQUENCE [GENOMIC RNA]</scope>
    <source>
        <strain>Isolate HKU-39849</strain>
    </source>
</reference>
<reference key="6">
    <citation type="journal article" date="2003" name="Lancet">
        <title>Comparative full-length genome sequence analysis of 14 SARS coronavirus isolates and common mutations associated with putative origins of infection.</title>
        <authorList>
            <person name="Ruan Y."/>
            <person name="Wei C.L."/>
            <person name="Ling A.E."/>
            <person name="Vega V.B."/>
            <person name="Thoreau H."/>
            <person name="Se Thoe S.Y."/>
            <person name="Chia J.-M."/>
            <person name="Ng P."/>
            <person name="Chiu K.P."/>
            <person name="Lim L."/>
            <person name="Zhang T."/>
            <person name="Chan K.P."/>
            <person name="Oon L.E.L."/>
            <person name="Ng M.L."/>
            <person name="Leo S.Y."/>
            <person name="Ng L.F.P."/>
            <person name="Ren E.C."/>
            <person name="Stanton L.W."/>
            <person name="Long P.M."/>
            <person name="Liu E.T."/>
        </authorList>
    </citation>
    <scope>NUCLEOTIDE SEQUENCE [GENOMIC RNA]</scope>
    <source>
        <strain>Isolate Sin2500</strain>
        <strain>Isolate Sin2677</strain>
        <strain>Isolate Sin2679</strain>
        <strain>Isolate Sin2748</strain>
        <strain>Isolate sin2774</strain>
    </source>
</reference>
<reference key="7">
    <citation type="journal article" date="2003" name="Lancet">
        <authorList>
            <person name="Ruan Y."/>
            <person name="Wei C.L."/>
            <person name="Ling A.E."/>
            <person name="Vega V.B."/>
            <person name="Thoreau H."/>
            <person name="Se Thoe S.Y."/>
            <person name="Chia J.-M."/>
            <person name="Ng P."/>
            <person name="Chiu K.P."/>
            <person name="Lim L."/>
            <person name="Zhang T."/>
            <person name="Chan K.P."/>
            <person name="Oon L.E.L."/>
            <person name="Ng M.L."/>
            <person name="Leo S.Y."/>
            <person name="Ng L.F.P."/>
            <person name="Ren E.C."/>
            <person name="Stanton L.W."/>
            <person name="Long P.M."/>
            <person name="Liu E.T."/>
        </authorList>
    </citation>
    <scope>ERRATUM OF PUBMED:12781537</scope>
</reference>
<reference key="8">
    <citation type="submission" date="2003-04" db="EMBL/GenBank/DDBJ databases">
        <authorList>
            <person name="Qin E."/>
            <person name="Zhu Q."/>
            <person name="Yu M."/>
            <person name="Fan B."/>
            <person name="Chang G."/>
            <person name="Si B."/>
            <person name="Yang B."/>
            <person name="Peng W."/>
            <person name="Jiang T."/>
            <person name="Liu B."/>
            <person name="Deng Y."/>
            <person name="Liu H."/>
            <person name="Zhang Y."/>
            <person name="Wang C."/>
            <person name="Li Y."/>
            <person name="Gan Y."/>
            <person name="Li X."/>
            <person name="Lu F."/>
            <person name="Tan G."/>
            <person name="Yang R."/>
            <person name="Cao W.S."/>
            <person name="Wang J."/>
            <person name="Chen W."/>
            <person name="Cong L."/>
            <person name="Deng Y."/>
            <person name="Dong W."/>
            <person name="Han Y."/>
            <person name="Hu W."/>
            <person name="Lei M."/>
            <person name="Li C."/>
            <person name="Li G."/>
            <person name="Li G."/>
            <person name="Li H."/>
            <person name="Li S."/>
            <person name="Li S."/>
            <person name="Li W."/>
            <person name="Li W."/>
            <person name="Lin W."/>
            <person name="Liu J."/>
            <person name="Liu Z."/>
            <person name="Lu H."/>
            <person name="Ni P."/>
            <person name="Qi Q."/>
            <person name="Sun Y."/>
            <person name="Tang L."/>
            <person name="Tong Z."/>
            <person name="Wang J."/>
            <person name="Wang X."/>
            <person name="Wu Q."/>
            <person name="Xi Y."/>
            <person name="Xu Z."/>
            <person name="Yang L."/>
            <person name="Ye C."/>
            <person name="Ye J."/>
            <person name="Zhang B."/>
            <person name="Zhang F."/>
            <person name="Zhang J."/>
            <person name="Zhang X."/>
            <person name="Zhou J."/>
            <person name="Yang H."/>
        </authorList>
    </citation>
    <scope>NUCLEOTIDE SEQUENCE [GENOMIC RNA]</scope>
    <source>
        <strain>Isolate BJ01</strain>
        <strain>Isolate BJ02</strain>
        <strain>Isolate BJ03</strain>
        <strain>Isolate BJ04</strain>
        <strain>Isolate GD01</strain>
    </source>
</reference>
<reference key="9">
    <citation type="submission" date="2003-05" db="EMBL/GenBank/DDBJ databases">
        <title>The complete genome of SARS coronavirus clone TW1.</title>
        <authorList>
            <person name="Yeh S.-H."/>
            <person name="Kao C.-L."/>
            <person name="Tsai C.-Y."/>
            <person name="Liu C.-J."/>
            <person name="Chen D.-S."/>
            <person name="Chen P.-J."/>
        </authorList>
    </citation>
    <scope>NUCLEOTIDE SEQUENCE [GENOMIC RNA]</scope>
    <source>
        <strain>Isolate TW1</strain>
    </source>
</reference>
<reference key="10">
    <citation type="submission" date="2003-05" db="EMBL/GenBank/DDBJ databases">
        <title>SARS virus is a close relative of type II coronaviruses.</title>
        <authorList>
            <person name="Eickmann M."/>
            <person name="Becker S."/>
            <person name="Klenk H.-D."/>
            <person name="Doerr H.W."/>
            <person name="Stadler K."/>
            <person name="Censini S."/>
            <person name="Guidotti S."/>
            <person name="Masignani V."/>
            <person name="Scarselli M."/>
            <person name="Mora M."/>
            <person name="Donati C."/>
            <person name="Han J."/>
            <person name="Song H.C."/>
            <person name="Abrignani S."/>
            <person name="Covacci A."/>
            <person name="Rappuoli R."/>
        </authorList>
    </citation>
    <scope>NUCLEOTIDE SEQUENCE [GENOMIC RNA]</scope>
    <source>
        <strain>Isolate FRA</strain>
    </source>
</reference>
<reference key="11">
    <citation type="journal article" date="2003" name="J. Gen. Virol.">
        <title>Mechanisms and enzymes involved in SARS coronavirus genome expression.</title>
        <authorList>
            <person name="Thiel V."/>
            <person name="Ivanov K.A."/>
            <person name="Putics A."/>
            <person name="Hertzig T."/>
            <person name="Schelle B."/>
            <person name="Bayer S."/>
            <person name="Weissbrich B."/>
            <person name="Snijder E.J."/>
            <person name="Rabenau H."/>
            <person name="Doerr H.W."/>
            <person name="Gorbalenya A.E."/>
            <person name="Ziebuhr J."/>
        </authorList>
    </citation>
    <scope>NUCLEOTIDE SEQUENCE [GENOMIC RNA]</scope>
    <source>
        <strain>Isolate Frankfurt 1</strain>
    </source>
</reference>
<reference key="12">
    <citation type="submission" date="2004-01" db="EMBL/GenBank/DDBJ databases">
        <title>Analysis of SARS coronavirus genome in Shanghai isolates.</title>
        <authorList>
            <person name="Yuan Z."/>
            <person name="Zhang X."/>
            <person name="Hu Y."/>
            <person name="Lan S."/>
            <person name="Wang H."/>
            <person name="Zhou Z."/>
            <person name="Wen Y."/>
        </authorList>
    </citation>
    <scope>NUCLEOTIDE SEQUENCE [GENOMIC RNA]</scope>
    <source>
        <strain>Isolate Shanghai QXC1</strain>
    </source>
</reference>
<reference key="13">
    <citation type="submission" date="2003-06" db="EMBL/GenBank/DDBJ databases">
        <title>SARS coronavirus ZJ01 isolate membrane glycoprotein.</title>
        <authorList>
            <person name="Cong L.-M."/>
            <person name="Ding G.-Q."/>
            <person name="Lu Y.-Y."/>
            <person name="Yan J.-Q."/>
            <person name="Weng J.-Q."/>
            <person name="Cheng S.-Y."/>
            <person name="Zhang Y.-J."/>
            <person name="Mei L.-L."/>
            <person name="Wang Z.-G."/>
            <person name="Hu N."/>
            <person name="Wo J."/>
            <person name="Yao J."/>
            <person name="Zhu H.-P."/>
            <person name="Lu Q.-Y."/>
            <person name="Li M.-H."/>
            <person name="Gong L.-M."/>
            <person name="Shi W."/>
        </authorList>
    </citation>
    <scope>NUCLEOTIDE SEQUENCE [MRNA]</scope>
    <source>
        <strain>Isolate ZJ01</strain>
    </source>
</reference>
<reference key="14">
    <citation type="submission" date="2003-06" db="EMBL/GenBank/DDBJ databases">
        <title>Genomic sequence of SARS isolate from the first fatal case in Taiwan.</title>
        <authorList>
            <person name="Yang J.-Y."/>
            <person name="Lin J.-H."/>
            <person name="Chiu S.-C."/>
            <person name="Wang S.-F."/>
            <person name="Lee S.C."/>
            <person name="Lin Y.-C."/>
            <person name="Hsu C.-K."/>
            <person name="Chen H.-Y."/>
            <person name="Chang J.G."/>
            <person name="Chen P.-J."/>
            <person name="Su I.-J."/>
        </authorList>
    </citation>
    <scope>NUCLEOTIDE SEQUENCE [GENOMIC RNA]</scope>
    <source>
        <strain>Isolate TWC</strain>
    </source>
</reference>
<reference key="15">
    <citation type="submission" date="2003-07" db="EMBL/GenBank/DDBJ databases">
        <authorList>
            <person name="Chang J.-G.C."/>
            <person name="Lin T.-H."/>
            <person name="Chen C.-M."/>
            <person name="Lin C.-S."/>
            <person name="Chan W.-L."/>
            <person name="Shih M.-C."/>
        </authorList>
    </citation>
    <scope>NUCLEOTIDE SEQUENCE [GENOMIC RNA]</scope>
    <source>
        <strain>Isolate Taiwan TC1</strain>
        <strain>Isolate Taiwan TC2</strain>
        <strain>Isolate Taiwan TC3</strain>
    </source>
</reference>
<reference key="16">
    <citation type="submission" date="2003-07" db="EMBL/GenBank/DDBJ databases">
        <authorList>
            <person name="Shu H.Y."/>
            <person name="Wu K.M."/>
            <person name="Tsai S.F."/>
        </authorList>
    </citation>
    <scope>NUCLEOTIDE SEQUENCE [GENOMIC RNA]</scope>
    <source>
        <strain>Isolate TWH</strain>
        <strain>Isolate TWJ</strain>
        <strain>Isolate TWK</strain>
        <strain>Isolate TWS</strain>
        <strain>Isolate TWY</strain>
    </source>
</reference>
<reference key="17">
    <citation type="submission" date="2003-07" db="EMBL/GenBank/DDBJ databases">
        <authorList>
            <person name="Canducci F."/>
            <person name="Clementi M."/>
            <person name="Poli G."/>
            <person name="Vicenzi E."/>
        </authorList>
    </citation>
    <scope>NUCLEOTIDE SEQUENCE [GENOMIC RNA]</scope>
    <source>
        <strain>Isolate HSR 1</strain>
    </source>
</reference>
<reference key="18">
    <citation type="submission" date="2003-08" db="EMBL/GenBank/DDBJ databases">
        <authorList>
            <person name="Yang J.-Y."/>
            <person name="Lin J.-H."/>
            <person name="Chiu S.-C."/>
            <person name="Wang S.-F."/>
            <person name="Lee H.-C."/>
            <person name="Lin Y.-C."/>
            <person name="Yao C.-W."/>
            <person name="Chiueh T.-S."/>
            <person name="Lu J.-J."/>
            <person name="Chen A."/>
            <person name="Hsu C.-K."/>
            <person name="Chen H.-Y."/>
            <person name="Chen P.-J."/>
            <person name="Su I.-J."/>
        </authorList>
    </citation>
    <scope>NUCLEOTIDE SEQUENCE [GENOMIC RNA]</scope>
    <source>
        <strain>Isolate TWC2</strain>
        <strain>Isolate TWC3</strain>
    </source>
</reference>
<reference key="19">
    <citation type="submission" date="2003-10" db="EMBL/GenBank/DDBJ databases">
        <authorList>
            <person name="Balotta C."/>
            <person name="Corvasce S."/>
            <person name="Violin M."/>
            <person name="Galli M."/>
            <person name="Moroni M."/>
            <person name="Vigevani G.M."/>
            <person name="Ruan Y.J."/>
            <person name="Salemi M."/>
        </authorList>
    </citation>
    <scope>NUCLEOTIDE SEQUENCE [GENOMIC RNA]</scope>
    <source>
        <strain>Isolate AS</strain>
    </source>
</reference>
<reference key="20">
    <citation type="journal article" date="2004" name="J. Virol.">
        <title>A novel severe acute respiratory syndrome coronavirus protein, U274, is transported to the cell surface and undergoes endocytosis.</title>
        <authorList>
            <person name="Tan Y.-J."/>
            <person name="Teng E."/>
            <person name="Shen S."/>
            <person name="Tan T.H.P."/>
            <person name="Goh P.-Y."/>
            <person name="Fielding B.C."/>
            <person name="Ooi E.-E."/>
            <person name="Tan H.-C."/>
            <person name="Lim S.G."/>
            <person name="Hong W."/>
        </authorList>
    </citation>
    <scope>INTERACTION WITH ACCESSORY PROTEIN 3A</scope>
</reference>
<reference key="21">
    <citation type="journal article" date="2005" name="Virus Res.">
        <title>Subcellular localization and membrane association of SARS-CoV 3a protein.</title>
        <authorList>
            <person name="Yuan X."/>
            <person name="Li J."/>
            <person name="Shan Y."/>
            <person name="Yang Z."/>
            <person name="Zhao Z."/>
            <person name="Chen B."/>
            <person name="Yao Z."/>
            <person name="Dong B."/>
            <person name="Wang S."/>
            <person name="Chen J."/>
            <person name="Cong Y."/>
        </authorList>
    </citation>
    <scope>INTERACTION WITH ACCESSORY PROTEIN 3A</scope>
</reference>
<reference key="22">
    <citation type="journal article" date="2006" name="Biochem. Biophys. Res. Commun.">
        <title>Severe acute respiratory syndrome coronavirus protein 7a interacts with hSGT.</title>
        <authorList>
            <person name="Fielding B.C."/>
            <person name="Gunalan V."/>
            <person name="Tan T.H.P."/>
            <person name="Chou C.-F."/>
            <person name="Shen S."/>
            <person name="Khan S."/>
            <person name="Lim S.G."/>
            <person name="Hong W."/>
            <person name="Tan Y.-J."/>
        </authorList>
    </citation>
    <scope>INTERACTION WITH ACCESSORY PROTEIN 7A</scope>
</reference>
<reference key="23">
    <citation type="journal article" date="2009" name="Virol. J.">
        <title>Studies on membrane topology, N-glycosylation and functionality of SARS-CoV membrane protein.</title>
        <authorList>
            <person name="Voss D."/>
            <person name="Pfefferle S."/>
            <person name="Drosten C."/>
            <person name="Stevermann L."/>
            <person name="Traggiai E."/>
            <person name="Lanzavecchia A."/>
            <person name="Becker S."/>
        </authorList>
    </citation>
    <scope>GLYCOSYLATION AT ASN-4</scope>
    <scope>TOPOLOGY</scope>
</reference>